<gene>
    <name evidence="14" type="primary">Tmc6</name>
    <name evidence="9" type="synonym">Ever1</name>
</gene>
<keyword id="KW-0025">Alternative splicing</keyword>
<keyword id="KW-0256">Endoplasmic reticulum</keyword>
<keyword id="KW-0325">Glycoprotein</keyword>
<keyword id="KW-0472">Membrane</keyword>
<keyword id="KW-0488">Methylation</keyword>
<keyword id="KW-0597">Phosphoprotein</keyword>
<keyword id="KW-1185">Reference proteome</keyword>
<keyword id="KW-0812">Transmembrane</keyword>
<keyword id="KW-1133">Transmembrane helix</keyword>
<reference key="1">
    <citation type="journal article" date="2003" name="Genomics">
        <title>Characterization of the transmembrane channel-like (TMC) gene family: functional clues from hearing loss and epidermodysplasia verruciformis.</title>
        <authorList>
            <person name="Kurima K."/>
            <person name="Yang Y."/>
            <person name="Sorber K."/>
            <person name="Griffith A.J."/>
        </authorList>
    </citation>
    <scope>NUCLEOTIDE SEQUENCE [MRNA] (ISOFORM 1)</scope>
    <scope>TISSUE SPECIFICITY</scope>
</reference>
<reference key="2">
    <citation type="journal article" date="2003" name="BMC Genomics">
        <title>TMC and EVER genes belong to a larger novel family, the TMC gene family encoding transmembrane proteins.</title>
        <authorList>
            <person name="Keresztes G."/>
            <person name="Mutai H."/>
            <person name="Heller S."/>
        </authorList>
    </citation>
    <scope>NUCLEOTIDE SEQUENCE [MRNA] (ISOFORM 1)</scope>
    <scope>TISSUE SPECIFICITY</scope>
    <source>
        <strain>C57BL/6J</strain>
    </source>
</reference>
<reference key="3">
    <citation type="journal article" date="2005" name="Science">
        <title>The transcriptional landscape of the mammalian genome.</title>
        <authorList>
            <person name="Carninci P."/>
            <person name="Kasukawa T."/>
            <person name="Katayama S."/>
            <person name="Gough J."/>
            <person name="Frith M.C."/>
            <person name="Maeda N."/>
            <person name="Oyama R."/>
            <person name="Ravasi T."/>
            <person name="Lenhard B."/>
            <person name="Wells C."/>
            <person name="Kodzius R."/>
            <person name="Shimokawa K."/>
            <person name="Bajic V.B."/>
            <person name="Brenner S.E."/>
            <person name="Batalov S."/>
            <person name="Forrest A.R."/>
            <person name="Zavolan M."/>
            <person name="Davis M.J."/>
            <person name="Wilming L.G."/>
            <person name="Aidinis V."/>
            <person name="Allen J.E."/>
            <person name="Ambesi-Impiombato A."/>
            <person name="Apweiler R."/>
            <person name="Aturaliya R.N."/>
            <person name="Bailey T.L."/>
            <person name="Bansal M."/>
            <person name="Baxter L."/>
            <person name="Beisel K.W."/>
            <person name="Bersano T."/>
            <person name="Bono H."/>
            <person name="Chalk A.M."/>
            <person name="Chiu K.P."/>
            <person name="Choudhary V."/>
            <person name="Christoffels A."/>
            <person name="Clutterbuck D.R."/>
            <person name="Crowe M.L."/>
            <person name="Dalla E."/>
            <person name="Dalrymple B.P."/>
            <person name="de Bono B."/>
            <person name="Della Gatta G."/>
            <person name="di Bernardo D."/>
            <person name="Down T."/>
            <person name="Engstrom P."/>
            <person name="Fagiolini M."/>
            <person name="Faulkner G."/>
            <person name="Fletcher C.F."/>
            <person name="Fukushima T."/>
            <person name="Furuno M."/>
            <person name="Futaki S."/>
            <person name="Gariboldi M."/>
            <person name="Georgii-Hemming P."/>
            <person name="Gingeras T.R."/>
            <person name="Gojobori T."/>
            <person name="Green R.E."/>
            <person name="Gustincich S."/>
            <person name="Harbers M."/>
            <person name="Hayashi Y."/>
            <person name="Hensch T.K."/>
            <person name="Hirokawa N."/>
            <person name="Hill D."/>
            <person name="Huminiecki L."/>
            <person name="Iacono M."/>
            <person name="Ikeo K."/>
            <person name="Iwama A."/>
            <person name="Ishikawa T."/>
            <person name="Jakt M."/>
            <person name="Kanapin A."/>
            <person name="Katoh M."/>
            <person name="Kawasawa Y."/>
            <person name="Kelso J."/>
            <person name="Kitamura H."/>
            <person name="Kitano H."/>
            <person name="Kollias G."/>
            <person name="Krishnan S.P."/>
            <person name="Kruger A."/>
            <person name="Kummerfeld S.K."/>
            <person name="Kurochkin I.V."/>
            <person name="Lareau L.F."/>
            <person name="Lazarevic D."/>
            <person name="Lipovich L."/>
            <person name="Liu J."/>
            <person name="Liuni S."/>
            <person name="McWilliam S."/>
            <person name="Madan Babu M."/>
            <person name="Madera M."/>
            <person name="Marchionni L."/>
            <person name="Matsuda H."/>
            <person name="Matsuzawa S."/>
            <person name="Miki H."/>
            <person name="Mignone F."/>
            <person name="Miyake S."/>
            <person name="Morris K."/>
            <person name="Mottagui-Tabar S."/>
            <person name="Mulder N."/>
            <person name="Nakano N."/>
            <person name="Nakauchi H."/>
            <person name="Ng P."/>
            <person name="Nilsson R."/>
            <person name="Nishiguchi S."/>
            <person name="Nishikawa S."/>
            <person name="Nori F."/>
            <person name="Ohara O."/>
            <person name="Okazaki Y."/>
            <person name="Orlando V."/>
            <person name="Pang K.C."/>
            <person name="Pavan W.J."/>
            <person name="Pavesi G."/>
            <person name="Pesole G."/>
            <person name="Petrovsky N."/>
            <person name="Piazza S."/>
            <person name="Reed J."/>
            <person name="Reid J.F."/>
            <person name="Ring B.Z."/>
            <person name="Ringwald M."/>
            <person name="Rost B."/>
            <person name="Ruan Y."/>
            <person name="Salzberg S.L."/>
            <person name="Sandelin A."/>
            <person name="Schneider C."/>
            <person name="Schoenbach C."/>
            <person name="Sekiguchi K."/>
            <person name="Semple C.A."/>
            <person name="Seno S."/>
            <person name="Sessa L."/>
            <person name="Sheng Y."/>
            <person name="Shibata Y."/>
            <person name="Shimada H."/>
            <person name="Shimada K."/>
            <person name="Silva D."/>
            <person name="Sinclair B."/>
            <person name="Sperling S."/>
            <person name="Stupka E."/>
            <person name="Sugiura K."/>
            <person name="Sultana R."/>
            <person name="Takenaka Y."/>
            <person name="Taki K."/>
            <person name="Tammoja K."/>
            <person name="Tan S.L."/>
            <person name="Tang S."/>
            <person name="Taylor M.S."/>
            <person name="Tegner J."/>
            <person name="Teichmann S.A."/>
            <person name="Ueda H.R."/>
            <person name="van Nimwegen E."/>
            <person name="Verardo R."/>
            <person name="Wei C.L."/>
            <person name="Yagi K."/>
            <person name="Yamanishi H."/>
            <person name="Zabarovsky E."/>
            <person name="Zhu S."/>
            <person name="Zimmer A."/>
            <person name="Hide W."/>
            <person name="Bult C."/>
            <person name="Grimmond S.M."/>
            <person name="Teasdale R.D."/>
            <person name="Liu E.T."/>
            <person name="Brusic V."/>
            <person name="Quackenbush J."/>
            <person name="Wahlestedt C."/>
            <person name="Mattick J.S."/>
            <person name="Hume D.A."/>
            <person name="Kai C."/>
            <person name="Sasaki D."/>
            <person name="Tomaru Y."/>
            <person name="Fukuda S."/>
            <person name="Kanamori-Katayama M."/>
            <person name="Suzuki M."/>
            <person name="Aoki J."/>
            <person name="Arakawa T."/>
            <person name="Iida J."/>
            <person name="Imamura K."/>
            <person name="Itoh M."/>
            <person name="Kato T."/>
            <person name="Kawaji H."/>
            <person name="Kawagashira N."/>
            <person name="Kawashima T."/>
            <person name="Kojima M."/>
            <person name="Kondo S."/>
            <person name="Konno H."/>
            <person name="Nakano K."/>
            <person name="Ninomiya N."/>
            <person name="Nishio T."/>
            <person name="Okada M."/>
            <person name="Plessy C."/>
            <person name="Shibata K."/>
            <person name="Shiraki T."/>
            <person name="Suzuki S."/>
            <person name="Tagami M."/>
            <person name="Waki K."/>
            <person name="Watahiki A."/>
            <person name="Okamura-Oho Y."/>
            <person name="Suzuki H."/>
            <person name="Kawai J."/>
            <person name="Hayashizaki Y."/>
        </authorList>
    </citation>
    <scope>NUCLEOTIDE SEQUENCE [LARGE SCALE MRNA] (ISOFORMS 2 AND 4)</scope>
    <source>
        <strain>C57BL/6J</strain>
        <tissue>Mammary gland</tissue>
    </source>
</reference>
<reference key="4">
    <citation type="journal article" date="2009" name="PLoS Biol.">
        <title>Lineage-specific biology revealed by a finished genome assembly of the mouse.</title>
        <authorList>
            <person name="Church D.M."/>
            <person name="Goodstadt L."/>
            <person name="Hillier L.W."/>
            <person name="Zody M.C."/>
            <person name="Goldstein S."/>
            <person name="She X."/>
            <person name="Bult C.J."/>
            <person name="Agarwala R."/>
            <person name="Cherry J.L."/>
            <person name="DiCuccio M."/>
            <person name="Hlavina W."/>
            <person name="Kapustin Y."/>
            <person name="Meric P."/>
            <person name="Maglott D."/>
            <person name="Birtle Z."/>
            <person name="Marques A.C."/>
            <person name="Graves T."/>
            <person name="Zhou S."/>
            <person name="Teague B."/>
            <person name="Potamousis K."/>
            <person name="Churas C."/>
            <person name="Place M."/>
            <person name="Herschleb J."/>
            <person name="Runnheim R."/>
            <person name="Forrest D."/>
            <person name="Amos-Landgraf J."/>
            <person name="Schwartz D.C."/>
            <person name="Cheng Z."/>
            <person name="Lindblad-Toh K."/>
            <person name="Eichler E.E."/>
            <person name="Ponting C.P."/>
        </authorList>
    </citation>
    <scope>NUCLEOTIDE SEQUENCE [LARGE SCALE GENOMIC DNA]</scope>
    <source>
        <strain>C57BL/6J</strain>
    </source>
</reference>
<reference key="5">
    <citation type="journal article" date="2004" name="Genome Res.">
        <title>The status, quality, and expansion of the NIH full-length cDNA project: the Mammalian Gene Collection (MGC).</title>
        <authorList>
            <consortium name="The MGC Project Team"/>
        </authorList>
    </citation>
    <scope>NUCLEOTIDE SEQUENCE [LARGE SCALE MRNA] (ISOFORMS 1 AND 3)</scope>
    <source>
        <strain>129</strain>
        <strain>FVB/N</strain>
        <tissue>Kidney</tissue>
        <tissue>Mammary gland</tissue>
    </source>
</reference>
<reference key="6">
    <citation type="journal article" date="2010" name="Cell">
        <title>A tissue-specific atlas of mouse protein phosphorylation and expression.</title>
        <authorList>
            <person name="Huttlin E.L."/>
            <person name="Jedrychowski M.P."/>
            <person name="Elias J.E."/>
            <person name="Goswami T."/>
            <person name="Rad R."/>
            <person name="Beausoleil S.A."/>
            <person name="Villen J."/>
            <person name="Haas W."/>
            <person name="Sowa M.E."/>
            <person name="Gygi S.P."/>
        </authorList>
    </citation>
    <scope>PHOSPHORYLATION [LARGE SCALE ANALYSIS] AT SER-136</scope>
    <scope>IDENTIFICATION BY MASS SPECTROMETRY [LARGE SCALE ANALYSIS]</scope>
    <source>
        <tissue>Spleen</tissue>
    </source>
</reference>
<reference key="7">
    <citation type="journal article" date="2014" name="Mol. Cell. Proteomics">
        <title>Immunoaffinity enrichment and mass spectrometry analysis of protein methylation.</title>
        <authorList>
            <person name="Guo A."/>
            <person name="Gu H."/>
            <person name="Zhou J."/>
            <person name="Mulhern D."/>
            <person name="Wang Y."/>
            <person name="Lee K.A."/>
            <person name="Yang V."/>
            <person name="Aguiar M."/>
            <person name="Kornhauser J."/>
            <person name="Jia X."/>
            <person name="Ren J."/>
            <person name="Beausoleil S.A."/>
            <person name="Silva J.C."/>
            <person name="Vemulapalli V."/>
            <person name="Bedford M.T."/>
            <person name="Comb M.J."/>
        </authorList>
    </citation>
    <scope>METHYLATION [LARGE SCALE ANALYSIS] AT ARG-93</scope>
    <scope>IDENTIFICATION BY MASS SPECTROMETRY [LARGE SCALE ANALYSIS]</scope>
    <source>
        <tissue>Brain</tissue>
        <tissue>Embryo</tissue>
    </source>
</reference>
<reference key="8">
    <citation type="journal article" date="2020" name="J. Biol. Chem.">
        <title>Expression of a TMC6-TMC8-CIB1 heterotrimeric complex in lymphocytes is regulated by each of the components.</title>
        <authorList>
            <person name="Wu C.J."/>
            <person name="Li X."/>
            <person name="Sommers C.L."/>
            <person name="Kurima K."/>
            <person name="Huh S."/>
            <person name="Bugos G."/>
            <person name="Dong L."/>
            <person name="Li W."/>
            <person name="Griffith A.J."/>
            <person name="Samelson L.E."/>
        </authorList>
    </citation>
    <scope>FUNCTION</scope>
    <scope>INTERACTION WITH TMC8 AMD CIB1</scope>
    <scope>DISRUPTION PHENOTYPE</scope>
    <scope>TISSUE SPECIFICITY</scope>
</reference>
<reference key="9">
    <citation type="journal article" date="2024" name="Front. Pharmacol.">
        <title>The transmembrane channel-like 6 (TMC6) in primary sensory neurons involving thermal sensation via modulating M channels.</title>
        <authorList>
            <person name="An Y."/>
            <person name="Hu J."/>
            <person name="Hao H."/>
            <person name="Zhao W."/>
            <person name="Zhang X."/>
            <person name="Shao J."/>
            <person name="Wang C."/>
            <person name="Li X."/>
            <person name="Liu C."/>
            <person name="He J."/>
            <person name="Zhao Y."/>
            <person name="Zhang H."/>
            <person name="Du X."/>
        </authorList>
    </citation>
    <scope>FUNCTION</scope>
    <scope>TISSUE SPECIFICITY</scope>
    <scope>DISRUPTION PHENOTYPE</scope>
</reference>
<sequence>MAQSLALALDVPETTGDEGLEPSPYEESEVHDSFHQLIQEQSLRVAEEGLELLPLGLGRGDQTLPGLEGAPALSSATLRILASMPSRTIGRSRGAIISQYYNRTVRLRRRSSRPLLGNVVPSARPSLRLYDLELDSTILEEDEKRSLLVKELQGLSAAQRDHMVRNMPLSLGEKRCLREKSWSPKGKRRHLQGRSGAFSCCSRLRYTCMLALHSLGLALLSGLYAARPWRYALKQIGGQFGSSVLSYFLFLKTLLAFNALMLLPLLAFLVGVQAAFPPDPAGPVPTFSGLELLTGGGRFTHTVMYYGYYSNSTLSPSCDAPREGGQCSPRLGSLPYNMPLAYLFTMGATFFLTCIILVYSMSHSFGESYRVGSTKGIHALTVFCSWDYKVTQKRASRVQQDSICTQLKELLAEWHLRKRPRSVCGQLRQVVVLGLGWLLCLGSTMGCTVAVLTFSEVMIQRPASGGQGVEALALPLVVSVLNLGASYLFRGLATLERHDSPVLEVYMAICRNLILKMAVLGVLCYHWLGRRVATLQGQCWEDFVGQELYRFMVVDFIFMLLDSLFGELVWRLISEKKLKRGQKPEFDIARNVLDLIYGQTLTWLGVLFSPLLPAVQILRLLFLFHIKKASLMANCQAPRRPWLASHMSTVFLTLLCFPSFLGAAVFLCYAVWQVRPSSTCGPFRTLNTMYEAGTVWVRRLEHAGSGASWLPWLHHFLVENTFFLFLASALLLAVIYFNIQVVKGQRKVICLLKEQIRNEGEDKIFLINKLHSVYEEEGRSRPGRTQDATEPPAWHEDGGDQKEPCNPRSP</sequence>
<feature type="chain" id="PRO_0000185385" description="Transmembrane channel-like protein 6">
    <location>
        <begin position="1"/>
        <end position="810"/>
    </location>
</feature>
<feature type="topological domain" description="Lumenal" evidence="3">
    <location>
        <begin position="1"/>
        <end position="205"/>
    </location>
</feature>
<feature type="transmembrane region" description="Helical" evidence="3">
    <location>
        <begin position="206"/>
        <end position="226"/>
    </location>
</feature>
<feature type="topological domain" description="Cytoplasmic" evidence="3">
    <location>
        <begin position="227"/>
        <end position="253"/>
    </location>
</feature>
<feature type="transmembrane region" description="Helical" evidence="3">
    <location>
        <begin position="254"/>
        <end position="274"/>
    </location>
</feature>
<feature type="topological domain" description="Lumenal" evidence="3">
    <location>
        <begin position="275"/>
        <end position="338"/>
    </location>
</feature>
<feature type="transmembrane region" description="Helical" evidence="3">
    <location>
        <begin position="339"/>
        <end position="359"/>
    </location>
</feature>
<feature type="topological domain" description="Cytoplasmic" evidence="3">
    <location>
        <begin position="360"/>
        <end position="429"/>
    </location>
</feature>
<feature type="transmembrane region" description="Helical" evidence="3">
    <location>
        <begin position="430"/>
        <end position="450"/>
    </location>
</feature>
<feature type="topological domain" description="Lumenal" evidence="3">
    <location>
        <begin position="451"/>
        <end position="468"/>
    </location>
</feature>
<feature type="transmembrane region" description="Helical" evidence="3">
    <location>
        <begin position="469"/>
        <end position="489"/>
    </location>
</feature>
<feature type="topological domain" description="Cytoplasmic" evidence="3">
    <location>
        <begin position="490"/>
        <end position="504"/>
    </location>
</feature>
<feature type="transmembrane region" description="Helical" evidence="3">
    <location>
        <begin position="505"/>
        <end position="525"/>
    </location>
</feature>
<feature type="topological domain" description="Lumenal" evidence="3">
    <location>
        <begin position="526"/>
        <end position="552"/>
    </location>
</feature>
<feature type="transmembrane region" description="Helical" evidence="3">
    <location>
        <begin position="553"/>
        <end position="573"/>
    </location>
</feature>
<feature type="topological domain" description="Cytoplasmic" evidence="3">
    <location>
        <begin position="574"/>
        <end position="603"/>
    </location>
</feature>
<feature type="transmembrane region" description="Helical" evidence="3">
    <location>
        <begin position="604"/>
        <end position="624"/>
    </location>
</feature>
<feature type="topological domain" description="Lumenal" evidence="3">
    <location>
        <begin position="625"/>
        <end position="649"/>
    </location>
</feature>
<feature type="transmembrane region" description="Helical" evidence="3">
    <location>
        <begin position="650"/>
        <end position="670"/>
    </location>
</feature>
<feature type="topological domain" description="Cytoplasmic" evidence="3">
    <location>
        <begin position="671"/>
        <end position="721"/>
    </location>
</feature>
<feature type="transmembrane region" description="Helical" evidence="3">
    <location>
        <begin position="722"/>
        <end position="742"/>
    </location>
</feature>
<feature type="topological domain" description="Lumenal" evidence="3">
    <location>
        <begin position="743"/>
        <end position="810"/>
    </location>
</feature>
<feature type="region of interest" description="Disordered" evidence="4">
    <location>
        <begin position="1"/>
        <end position="26"/>
    </location>
</feature>
<feature type="region of interest" description="Disordered" evidence="4">
    <location>
        <begin position="775"/>
        <end position="810"/>
    </location>
</feature>
<feature type="compositionally biased region" description="Acidic residues" evidence="4">
    <location>
        <begin position="15"/>
        <end position="26"/>
    </location>
</feature>
<feature type="compositionally biased region" description="Basic and acidic residues" evidence="4">
    <location>
        <begin position="793"/>
        <end position="810"/>
    </location>
</feature>
<feature type="modified residue" description="Phosphothreonine" evidence="2">
    <location>
        <position position="88"/>
    </location>
</feature>
<feature type="modified residue" description="Omega-N-methylarginine" evidence="16">
    <location>
        <position position="93"/>
    </location>
</feature>
<feature type="modified residue" description="Phosphothreonine" evidence="2">
    <location>
        <position position="104"/>
    </location>
</feature>
<feature type="modified residue" description="Phosphoserine" evidence="15">
    <location>
        <position position="136"/>
    </location>
</feature>
<feature type="glycosylation site" description="N-linked (GlcNAc...) asparagine" evidence="3">
    <location>
        <position position="102"/>
    </location>
</feature>
<feature type="glycosylation site" description="N-linked (GlcNAc...) asparagine" evidence="3">
    <location>
        <position position="311"/>
    </location>
</feature>
<feature type="splice variant" id="VSP_016443" description="In isoform 3." evidence="11">
    <location>
        <begin position="1"/>
        <end position="360"/>
    </location>
</feature>
<feature type="splice variant" id="VSP_016444" description="In isoform 2." evidence="12">
    <location>
        <begin position="1"/>
        <end position="260"/>
    </location>
</feature>
<feature type="splice variant" id="VSP_016445" description="In isoform 4." evidence="12">
    <original>GRFTHTVMYYGYYSNSTLSPSCDAPREGGQCS</original>
    <variation>VRPSAPALAKNWCQACPDSPGGLLPVPRYLYG</variation>
    <location>
        <begin position="297"/>
        <end position="328"/>
    </location>
</feature>
<feature type="splice variant" id="VSP_016446" description="In isoform 4." evidence="12">
    <location>
        <begin position="329"/>
        <end position="810"/>
    </location>
</feature>
<feature type="splice variant" id="VSP_016447" description="In isoform 2." evidence="12">
    <original>RPGRTQDATEPPAWHEDGGDQKEPCNPRSP</original>
    <variation>SKLGLVPSGHVCRSPAAAVRAPHIETDVLKLKA</variation>
    <location>
        <begin position="781"/>
        <end position="810"/>
    </location>
</feature>
<feature type="sequence conflict" description="In Ref. 1; AAP69875." evidence="13" ref="1">
    <original>A</original>
    <variation>T</variation>
    <location>
        <position position="2"/>
    </location>
</feature>
<feature type="sequence conflict" description="In Ref. 1; AAP69875." evidence="13" ref="1">
    <original>M</original>
    <variation>T</variation>
    <location>
        <position position="338"/>
    </location>
</feature>
<feature type="sequence conflict" description="In Ref. 3; BAC36945." evidence="13" ref="3">
    <original>F</original>
    <variation>L</variation>
    <location>
        <position position="365"/>
    </location>
</feature>
<protein>
    <recommendedName>
        <fullName evidence="10">Transmembrane channel-like protein 6</fullName>
    </recommendedName>
</protein>
<dbReference type="EMBL" id="AY236497">
    <property type="protein sequence ID" value="AAP69875.1"/>
    <property type="molecule type" value="mRNA"/>
</dbReference>
<dbReference type="EMBL" id="AY263158">
    <property type="protein sequence ID" value="AAP78773.1"/>
    <property type="molecule type" value="mRNA"/>
</dbReference>
<dbReference type="EMBL" id="AK052814">
    <property type="protein sequence ID" value="BAC35157.1"/>
    <property type="molecule type" value="mRNA"/>
</dbReference>
<dbReference type="EMBL" id="AK077671">
    <property type="protein sequence ID" value="BAC36945.1"/>
    <property type="molecule type" value="mRNA"/>
</dbReference>
<dbReference type="EMBL" id="AL645856">
    <property type="status" value="NOT_ANNOTATED_CDS"/>
    <property type="molecule type" value="Genomic_DNA"/>
</dbReference>
<dbReference type="EMBL" id="BC004840">
    <property type="protein sequence ID" value="AAH04840.2"/>
    <property type="molecule type" value="mRNA"/>
</dbReference>
<dbReference type="EMBL" id="BC013502">
    <property type="protein sequence ID" value="AAH13502.1"/>
    <property type="molecule type" value="mRNA"/>
</dbReference>
<dbReference type="EMBL" id="BC058195">
    <property type="protein sequence ID" value="AAH58195.1"/>
    <property type="molecule type" value="mRNA"/>
</dbReference>
<dbReference type="CCDS" id="CCDS25687.1">
    <molecule id="Q7TN60-1"/>
</dbReference>
<dbReference type="RefSeq" id="NP_663414.3">
    <property type="nucleotide sequence ID" value="NM_145439.2"/>
</dbReference>
<dbReference type="RefSeq" id="NP_851838.1">
    <property type="nucleotide sequence ID" value="NM_181321.3"/>
</dbReference>
<dbReference type="SMR" id="Q7TN60"/>
<dbReference type="BioGRID" id="229898">
    <property type="interactions" value="1"/>
</dbReference>
<dbReference type="FunCoup" id="Q7TN60">
    <property type="interactions" value="832"/>
</dbReference>
<dbReference type="STRING" id="10090.ENSMUSP00000026659"/>
<dbReference type="GlyCosmos" id="Q7TN60">
    <property type="glycosylation" value="2 sites, No reported glycans"/>
</dbReference>
<dbReference type="GlyGen" id="Q7TN60">
    <property type="glycosylation" value="2 sites"/>
</dbReference>
<dbReference type="iPTMnet" id="Q7TN60"/>
<dbReference type="PhosphoSitePlus" id="Q7TN60"/>
<dbReference type="jPOST" id="Q7TN60"/>
<dbReference type="PaxDb" id="10090-ENSMUSP00000026659"/>
<dbReference type="ProteomicsDB" id="259242">
    <molecule id="Q7TN60-1"/>
</dbReference>
<dbReference type="ProteomicsDB" id="259243">
    <molecule id="Q7TN60-2"/>
</dbReference>
<dbReference type="ProteomicsDB" id="259244">
    <molecule id="Q7TN60-3"/>
</dbReference>
<dbReference type="ProteomicsDB" id="259245">
    <molecule id="Q7TN60-4"/>
</dbReference>
<dbReference type="DNASU" id="217353"/>
<dbReference type="GeneID" id="217353"/>
<dbReference type="KEGG" id="mmu:217353"/>
<dbReference type="UCSC" id="uc007mnn.2">
    <molecule id="Q7TN60-2"/>
    <property type="organism name" value="mouse"/>
</dbReference>
<dbReference type="UCSC" id="uc007mnr.2">
    <molecule id="Q7TN60-4"/>
    <property type="organism name" value="mouse"/>
</dbReference>
<dbReference type="AGR" id="MGI:1098686"/>
<dbReference type="CTD" id="11322"/>
<dbReference type="MGI" id="MGI:1098686">
    <property type="gene designation" value="Tmc6"/>
</dbReference>
<dbReference type="eggNOG" id="KOG1039">
    <property type="taxonomic scope" value="Eukaryota"/>
</dbReference>
<dbReference type="InParanoid" id="Q7TN60"/>
<dbReference type="OrthoDB" id="1936208at2759"/>
<dbReference type="PhylomeDB" id="Q7TN60"/>
<dbReference type="Reactome" id="R-MMU-6798695">
    <property type="pathway name" value="Neutrophil degranulation"/>
</dbReference>
<dbReference type="BioGRID-ORCS" id="217353">
    <property type="hits" value="4 hits in 79 CRISPR screens"/>
</dbReference>
<dbReference type="ChiTaRS" id="Tmc6">
    <property type="organism name" value="mouse"/>
</dbReference>
<dbReference type="PRO" id="PR:Q7TN60"/>
<dbReference type="Proteomes" id="UP000000589">
    <property type="component" value="Unplaced"/>
</dbReference>
<dbReference type="RNAct" id="Q7TN60">
    <property type="molecule type" value="protein"/>
</dbReference>
<dbReference type="GO" id="GO:0005789">
    <property type="term" value="C:endoplasmic reticulum membrane"/>
    <property type="evidence" value="ECO:0007669"/>
    <property type="project" value="UniProtKB-SubCell"/>
</dbReference>
<dbReference type="GO" id="GO:0005886">
    <property type="term" value="C:plasma membrane"/>
    <property type="evidence" value="ECO:0007669"/>
    <property type="project" value="InterPro"/>
</dbReference>
<dbReference type="GO" id="GO:0006882">
    <property type="term" value="P:intracellular zinc ion homeostasis"/>
    <property type="evidence" value="ECO:0000250"/>
    <property type="project" value="UniProtKB"/>
</dbReference>
<dbReference type="GO" id="GO:0050821">
    <property type="term" value="P:protein stabilization"/>
    <property type="evidence" value="ECO:0000315"/>
    <property type="project" value="UniProtKB"/>
</dbReference>
<dbReference type="InterPro" id="IPR038900">
    <property type="entry name" value="TMC"/>
</dbReference>
<dbReference type="InterPro" id="IPR012496">
    <property type="entry name" value="TMC_dom"/>
</dbReference>
<dbReference type="PANTHER" id="PTHR23302:SF4">
    <property type="entry name" value="TRANSMEMBRANE CHANNEL-LIKE PROTEIN 6"/>
    <property type="match status" value="1"/>
</dbReference>
<dbReference type="PANTHER" id="PTHR23302">
    <property type="entry name" value="TRANSMEMBRANE CHANNEL-RELATED"/>
    <property type="match status" value="1"/>
</dbReference>
<dbReference type="Pfam" id="PF07810">
    <property type="entry name" value="TMC"/>
    <property type="match status" value="1"/>
</dbReference>
<proteinExistence type="evidence at protein level"/>
<evidence type="ECO:0000250" key="1"/>
<evidence type="ECO:0000250" key="2">
    <source>
        <dbReference type="UniProtKB" id="Q7Z403"/>
    </source>
</evidence>
<evidence type="ECO:0000255" key="3"/>
<evidence type="ECO:0000256" key="4">
    <source>
        <dbReference type="SAM" id="MobiDB-lite"/>
    </source>
</evidence>
<evidence type="ECO:0000269" key="5">
    <source>
    </source>
</evidence>
<evidence type="ECO:0000269" key="6">
    <source>
    </source>
</evidence>
<evidence type="ECO:0000269" key="7">
    <source>
    </source>
</evidence>
<evidence type="ECO:0000269" key="8">
    <source>
    </source>
</evidence>
<evidence type="ECO:0000303" key="9">
    <source>
    </source>
</evidence>
<evidence type="ECO:0000303" key="10">
    <source>
    </source>
</evidence>
<evidence type="ECO:0000303" key="11">
    <source>
    </source>
</evidence>
<evidence type="ECO:0000303" key="12">
    <source>
    </source>
</evidence>
<evidence type="ECO:0000305" key="13"/>
<evidence type="ECO:0000312" key="14">
    <source>
        <dbReference type="MGI" id="MGI:1098686"/>
    </source>
</evidence>
<evidence type="ECO:0007744" key="15">
    <source>
    </source>
</evidence>
<evidence type="ECO:0007744" key="16">
    <source>
    </source>
</evidence>
<comment type="function">
    <text evidence="2 7 8">Acts as a regulatory protein involved in the regulation of numerous cellular processes (PubMed:32917726, PubMed:38440182). Together with its homolog TMC8/EVER2, forms a complex with calcium-binding protein CIB1 in lymphocytes and keratynocytes where TMC6 and TMC8 stabilize CIB1 and reciprocally (PubMed:32917726). Together with TMC8, also forms a complex with and activates zinc transporter ZNT1 at the ER membrane of keratynocytes, thereby facilitating zinc uptake into the ER (By similarity). Down-regulates the activity of transcription factors induced by zinc and cytokines (By similarity). Also plays a role in thermal sensation by inhibiting the M-channel (KCNQ2-KCNQ3 channel) current in primary sensory neurons (PubMed:38440182).</text>
</comment>
<comment type="subunit">
    <text evidence="2 7">Interacts with TMC8 (PubMed:32917726). Interacts and forms a complex with TMC8 and CIB1; the interaction stabilizes each component of the complex (PubMed:32917726). Interacts and forms a complex with TMC8 and SLC30A1/ZNT1; the interaction regulates zinc transport into the ER (By similarity).</text>
</comment>
<comment type="subcellular location">
    <subcellularLocation>
        <location evidence="1">Endoplasmic reticulum membrane</location>
        <topology evidence="1">Multi-pass membrane protein</topology>
    </subcellularLocation>
</comment>
<comment type="alternative products">
    <event type="alternative splicing"/>
    <isoform>
        <id>Q7TN60-1</id>
        <name>1</name>
        <sequence type="displayed"/>
    </isoform>
    <isoform>
        <id>Q7TN60-2</id>
        <name>2</name>
        <sequence type="described" ref="VSP_016444 VSP_016447"/>
    </isoform>
    <isoform>
        <id>Q7TN60-3</id>
        <name>3</name>
        <sequence type="described" ref="VSP_016443"/>
    </isoform>
    <isoform>
        <id>Q7TN60-4</id>
        <name>4</name>
        <sequence type="described" ref="VSP_016445 VSP_016446"/>
    </isoform>
</comment>
<comment type="tissue specificity">
    <text evidence="5 6 7 8">Widely expressed (PubMed:12812529, PubMed:12906855). Highly expressed in thymus, lung and spleen (PubMed:32917726). Expressed in lymphocytes and peripheral lymphocytes (PubMed:32917726). Expressed in small and medium dorsal root ganglion (DRG) neurons (PubMed:38440182).</text>
</comment>
<comment type="disruption phenotype">
    <text evidence="7 8">Knocktout mice breed and grow normally (PubMed:32917726). No major defect in T cell subset numbers or function (PubMed:32917726). Decrease in CIB1 protein level in thymocytes and lymph node cells (PubMed:32917726). In knocktout mice, heat and mechanical hyperalgesia in chronic pain are alleviated (PubMed:38440182). In knocktout mice, DRG neurons exhibit a hyperpolarized resting membrane potential compared with WT neurons. Small to medium DRG neurons show reduced excitability compared with WT neurons (PubMed:38440182).</text>
</comment>
<comment type="similarity">
    <text evidence="13">Belongs to the TMC family.</text>
</comment>
<organism>
    <name type="scientific">Mus musculus</name>
    <name type="common">Mouse</name>
    <dbReference type="NCBI Taxonomy" id="10090"/>
    <lineage>
        <taxon>Eukaryota</taxon>
        <taxon>Metazoa</taxon>
        <taxon>Chordata</taxon>
        <taxon>Craniata</taxon>
        <taxon>Vertebrata</taxon>
        <taxon>Euteleostomi</taxon>
        <taxon>Mammalia</taxon>
        <taxon>Eutheria</taxon>
        <taxon>Euarchontoglires</taxon>
        <taxon>Glires</taxon>
        <taxon>Rodentia</taxon>
        <taxon>Myomorpha</taxon>
        <taxon>Muroidea</taxon>
        <taxon>Muridae</taxon>
        <taxon>Murinae</taxon>
        <taxon>Mus</taxon>
        <taxon>Mus</taxon>
    </lineage>
</organism>
<accession>Q7TN60</accession>
<accession>B1ATB4</accession>
<accession>Q78JR7</accession>
<accession>Q7TQ68</accession>
<accession>Q8BP52</accession>
<accession>Q8C6Z5</accession>
<accession>Q99J32</accession>
<name>TMC6_MOUSE</name>